<evidence type="ECO:0000255" key="1">
    <source>
        <dbReference type="PROSITE-ProRule" id="PRU00037"/>
    </source>
</evidence>
<evidence type="ECO:0000269" key="2">
    <source>
    </source>
</evidence>
<evidence type="ECO:0000269" key="3">
    <source>
    </source>
</evidence>
<evidence type="ECO:0000269" key="4">
    <source>
    </source>
</evidence>
<evidence type="ECO:0000269" key="5">
    <source>
    </source>
</evidence>
<evidence type="ECO:0000269" key="6">
    <source>
    </source>
</evidence>
<evidence type="ECO:0000303" key="7">
    <source>
    </source>
</evidence>
<evidence type="ECO:0000305" key="8"/>
<reference key="1">
    <citation type="journal article" date="2001" name="Cancer Res.">
        <title>Cloning and characterization of CLLD6, CLLD7, and CLLD8, novel candidate genes for leukemogenesis at chromosome 13q14, a region commonly deleted in B-cell chronic lymphocytic leukemia.</title>
        <authorList>
            <person name="Mabuchi H."/>
            <person name="Fujii H."/>
            <person name="Calin G."/>
            <person name="Alder H."/>
            <person name="Negrini M."/>
            <person name="Rassenti L."/>
            <person name="Kipps T.J."/>
            <person name="Bullrich F."/>
            <person name="Croce C.M."/>
        </authorList>
    </citation>
    <scope>NUCLEOTIDE SEQUENCE [MRNA] (ISOFORM 1)</scope>
    <scope>VARIANTS VAL-24 AND ILE-500</scope>
    <scope>TISSUE SPECIFICITY</scope>
    <scope>FUNCTION</scope>
</reference>
<reference key="2">
    <citation type="journal article" date="2003" name="Leuk. Lymphoma">
        <title>13q deletion in chronic lymphocytic leukemia: characterization of E4.5, a novel chromosome condensation regulator-like guanine nucleotide exchange factor.</title>
        <authorList>
            <person name="Solomou E.E."/>
            <person name="Sfikakis P.P."/>
            <person name="Kotsi P."/>
            <person name="Papaioannou M."/>
            <person name="Karali V."/>
            <person name="Vervessou E."/>
            <person name="Hoffbrand A.V."/>
            <person name="Panayiotidis P."/>
        </authorList>
    </citation>
    <scope>NUCLEOTIDE SEQUENCE [MRNA] (ISOFORM 1)</scope>
    <scope>VARIANT VAL-24</scope>
</reference>
<reference key="3">
    <citation type="journal article" date="2004" name="Nat. Genet.">
        <title>Complete sequencing and characterization of 21,243 full-length human cDNAs.</title>
        <authorList>
            <person name="Ota T."/>
            <person name="Suzuki Y."/>
            <person name="Nishikawa T."/>
            <person name="Otsuki T."/>
            <person name="Sugiyama T."/>
            <person name="Irie R."/>
            <person name="Wakamatsu A."/>
            <person name="Hayashi K."/>
            <person name="Sato H."/>
            <person name="Nagai K."/>
            <person name="Kimura K."/>
            <person name="Makita H."/>
            <person name="Sekine M."/>
            <person name="Obayashi M."/>
            <person name="Nishi T."/>
            <person name="Shibahara T."/>
            <person name="Tanaka T."/>
            <person name="Ishii S."/>
            <person name="Yamamoto J."/>
            <person name="Saito K."/>
            <person name="Kawai Y."/>
            <person name="Isono Y."/>
            <person name="Nakamura Y."/>
            <person name="Nagahari K."/>
            <person name="Murakami K."/>
            <person name="Yasuda T."/>
            <person name="Iwayanagi T."/>
            <person name="Wagatsuma M."/>
            <person name="Shiratori A."/>
            <person name="Sudo H."/>
            <person name="Hosoiri T."/>
            <person name="Kaku Y."/>
            <person name="Kodaira H."/>
            <person name="Kondo H."/>
            <person name="Sugawara M."/>
            <person name="Takahashi M."/>
            <person name="Kanda K."/>
            <person name="Yokoi T."/>
            <person name="Furuya T."/>
            <person name="Kikkawa E."/>
            <person name="Omura Y."/>
            <person name="Abe K."/>
            <person name="Kamihara K."/>
            <person name="Katsuta N."/>
            <person name="Sato K."/>
            <person name="Tanikawa M."/>
            <person name="Yamazaki M."/>
            <person name="Ninomiya K."/>
            <person name="Ishibashi T."/>
            <person name="Yamashita H."/>
            <person name="Murakawa K."/>
            <person name="Fujimori K."/>
            <person name="Tanai H."/>
            <person name="Kimata M."/>
            <person name="Watanabe M."/>
            <person name="Hiraoka S."/>
            <person name="Chiba Y."/>
            <person name="Ishida S."/>
            <person name="Ono Y."/>
            <person name="Takiguchi S."/>
            <person name="Watanabe S."/>
            <person name="Yosida M."/>
            <person name="Hotuta T."/>
            <person name="Kusano J."/>
            <person name="Kanehori K."/>
            <person name="Takahashi-Fujii A."/>
            <person name="Hara H."/>
            <person name="Tanase T.-O."/>
            <person name="Nomura Y."/>
            <person name="Togiya S."/>
            <person name="Komai F."/>
            <person name="Hara R."/>
            <person name="Takeuchi K."/>
            <person name="Arita M."/>
            <person name="Imose N."/>
            <person name="Musashino K."/>
            <person name="Yuuki H."/>
            <person name="Oshima A."/>
            <person name="Sasaki N."/>
            <person name="Aotsuka S."/>
            <person name="Yoshikawa Y."/>
            <person name="Matsunawa H."/>
            <person name="Ichihara T."/>
            <person name="Shiohata N."/>
            <person name="Sano S."/>
            <person name="Moriya S."/>
            <person name="Momiyama H."/>
            <person name="Satoh N."/>
            <person name="Takami S."/>
            <person name="Terashima Y."/>
            <person name="Suzuki O."/>
            <person name="Nakagawa S."/>
            <person name="Senoh A."/>
            <person name="Mizoguchi H."/>
            <person name="Goto Y."/>
            <person name="Shimizu F."/>
            <person name="Wakebe H."/>
            <person name="Hishigaki H."/>
            <person name="Watanabe T."/>
            <person name="Sugiyama A."/>
            <person name="Takemoto M."/>
            <person name="Kawakami B."/>
            <person name="Yamazaki M."/>
            <person name="Watanabe K."/>
            <person name="Kumagai A."/>
            <person name="Itakura S."/>
            <person name="Fukuzumi Y."/>
            <person name="Fujimori Y."/>
            <person name="Komiyama M."/>
            <person name="Tashiro H."/>
            <person name="Tanigami A."/>
            <person name="Fujiwara T."/>
            <person name="Ono T."/>
            <person name="Yamada K."/>
            <person name="Fujii Y."/>
            <person name="Ozaki K."/>
            <person name="Hirao M."/>
            <person name="Ohmori Y."/>
            <person name="Kawabata A."/>
            <person name="Hikiji T."/>
            <person name="Kobatake N."/>
            <person name="Inagaki H."/>
            <person name="Ikema Y."/>
            <person name="Okamoto S."/>
            <person name="Okitani R."/>
            <person name="Kawakami T."/>
            <person name="Noguchi S."/>
            <person name="Itoh T."/>
            <person name="Shigeta K."/>
            <person name="Senba T."/>
            <person name="Matsumura K."/>
            <person name="Nakajima Y."/>
            <person name="Mizuno T."/>
            <person name="Morinaga M."/>
            <person name="Sasaki M."/>
            <person name="Togashi T."/>
            <person name="Oyama M."/>
            <person name="Hata H."/>
            <person name="Watanabe M."/>
            <person name="Komatsu T."/>
            <person name="Mizushima-Sugano J."/>
            <person name="Satoh T."/>
            <person name="Shirai Y."/>
            <person name="Takahashi Y."/>
            <person name="Nakagawa K."/>
            <person name="Okumura K."/>
            <person name="Nagase T."/>
            <person name="Nomura N."/>
            <person name="Kikuchi H."/>
            <person name="Masuho Y."/>
            <person name="Yamashita R."/>
            <person name="Nakai K."/>
            <person name="Yada T."/>
            <person name="Nakamura Y."/>
            <person name="Ohara O."/>
            <person name="Isogai T."/>
            <person name="Sugano S."/>
        </authorList>
    </citation>
    <scope>NUCLEOTIDE SEQUENCE [LARGE SCALE MRNA] (ISOFORM 1)</scope>
    <scope>VARIANT VAL-24</scope>
    <source>
        <tissue>Brain</tissue>
    </source>
</reference>
<reference key="4">
    <citation type="journal article" date="2007" name="BMC Genomics">
        <title>The full-ORF clone resource of the German cDNA consortium.</title>
        <authorList>
            <person name="Bechtel S."/>
            <person name="Rosenfelder H."/>
            <person name="Duda A."/>
            <person name="Schmidt C.P."/>
            <person name="Ernst U."/>
            <person name="Wellenreuther R."/>
            <person name="Mehrle A."/>
            <person name="Schuster C."/>
            <person name="Bahr A."/>
            <person name="Bloecker H."/>
            <person name="Heubner D."/>
            <person name="Hoerlein A."/>
            <person name="Michel G."/>
            <person name="Wedler H."/>
            <person name="Koehrer K."/>
            <person name="Ottenwaelder B."/>
            <person name="Poustka A."/>
            <person name="Wiemann S."/>
            <person name="Schupp I."/>
        </authorList>
    </citation>
    <scope>NUCLEOTIDE SEQUENCE [LARGE SCALE MRNA] (ISOFORM 1)</scope>
    <source>
        <tissue>Uterus</tissue>
    </source>
</reference>
<reference key="5">
    <citation type="journal article" date="2004" name="Nature">
        <title>The DNA sequence and analysis of human chromosome 13.</title>
        <authorList>
            <person name="Dunham A."/>
            <person name="Matthews L.H."/>
            <person name="Burton J."/>
            <person name="Ashurst J.L."/>
            <person name="Howe K.L."/>
            <person name="Ashcroft K.J."/>
            <person name="Beare D.M."/>
            <person name="Burford D.C."/>
            <person name="Hunt S.E."/>
            <person name="Griffiths-Jones S."/>
            <person name="Jones M.C."/>
            <person name="Keenan S.J."/>
            <person name="Oliver K."/>
            <person name="Scott C.E."/>
            <person name="Ainscough R."/>
            <person name="Almeida J.P."/>
            <person name="Ambrose K.D."/>
            <person name="Andrews D.T."/>
            <person name="Ashwell R.I.S."/>
            <person name="Babbage A.K."/>
            <person name="Bagguley C.L."/>
            <person name="Bailey J."/>
            <person name="Bannerjee R."/>
            <person name="Barlow K.F."/>
            <person name="Bates K."/>
            <person name="Beasley H."/>
            <person name="Bird C.P."/>
            <person name="Bray-Allen S."/>
            <person name="Brown A.J."/>
            <person name="Brown J.Y."/>
            <person name="Burrill W."/>
            <person name="Carder C."/>
            <person name="Carter N.P."/>
            <person name="Chapman J.C."/>
            <person name="Clamp M.E."/>
            <person name="Clark S.Y."/>
            <person name="Clarke G."/>
            <person name="Clee C.M."/>
            <person name="Clegg S.C."/>
            <person name="Cobley V."/>
            <person name="Collins J.E."/>
            <person name="Corby N."/>
            <person name="Coville G.J."/>
            <person name="Deloukas P."/>
            <person name="Dhami P."/>
            <person name="Dunham I."/>
            <person name="Dunn M."/>
            <person name="Earthrowl M.E."/>
            <person name="Ellington A.G."/>
            <person name="Faulkner L."/>
            <person name="Frankish A.G."/>
            <person name="Frankland J."/>
            <person name="French L."/>
            <person name="Garner P."/>
            <person name="Garnett J."/>
            <person name="Gilbert J.G.R."/>
            <person name="Gilson C.J."/>
            <person name="Ghori J."/>
            <person name="Grafham D.V."/>
            <person name="Gribble S.M."/>
            <person name="Griffiths C."/>
            <person name="Hall R.E."/>
            <person name="Hammond S."/>
            <person name="Harley J.L."/>
            <person name="Hart E.A."/>
            <person name="Heath P.D."/>
            <person name="Howden P.J."/>
            <person name="Huckle E.J."/>
            <person name="Hunt P.J."/>
            <person name="Hunt A.R."/>
            <person name="Johnson C."/>
            <person name="Johnson D."/>
            <person name="Kay M."/>
            <person name="Kimberley A.M."/>
            <person name="King A."/>
            <person name="Laird G.K."/>
            <person name="Langford C.J."/>
            <person name="Lawlor S."/>
            <person name="Leongamornlert D.A."/>
            <person name="Lloyd D.M."/>
            <person name="Lloyd C."/>
            <person name="Loveland J.E."/>
            <person name="Lovell J."/>
            <person name="Martin S."/>
            <person name="Mashreghi-Mohammadi M."/>
            <person name="McLaren S.J."/>
            <person name="McMurray A."/>
            <person name="Milne S."/>
            <person name="Moore M.J.F."/>
            <person name="Nickerson T."/>
            <person name="Palmer S.A."/>
            <person name="Pearce A.V."/>
            <person name="Peck A.I."/>
            <person name="Pelan S."/>
            <person name="Phillimore B."/>
            <person name="Porter K.M."/>
            <person name="Rice C.M."/>
            <person name="Searle S."/>
            <person name="Sehra H.K."/>
            <person name="Shownkeen R."/>
            <person name="Skuce C.D."/>
            <person name="Smith M."/>
            <person name="Steward C.A."/>
            <person name="Sycamore N."/>
            <person name="Tester J."/>
            <person name="Thomas D.W."/>
            <person name="Tracey A."/>
            <person name="Tromans A."/>
            <person name="Tubby B."/>
            <person name="Wall M."/>
            <person name="Wallis J.M."/>
            <person name="West A.P."/>
            <person name="Whitehead S.L."/>
            <person name="Willey D.L."/>
            <person name="Wilming L."/>
            <person name="Wray P.W."/>
            <person name="Wright M.W."/>
            <person name="Young L."/>
            <person name="Coulson A."/>
            <person name="Durbin R.M."/>
            <person name="Hubbard T."/>
            <person name="Sulston J.E."/>
            <person name="Beck S."/>
            <person name="Bentley D.R."/>
            <person name="Rogers J."/>
            <person name="Ross M.T."/>
        </authorList>
    </citation>
    <scope>NUCLEOTIDE SEQUENCE [LARGE SCALE GENOMIC DNA]</scope>
</reference>
<reference key="6">
    <citation type="journal article" date="2004" name="Genome Res.">
        <title>The status, quality, and expansion of the NIH full-length cDNA project: the Mammalian Gene Collection (MGC).</title>
        <authorList>
            <consortium name="The MGC Project Team"/>
        </authorList>
    </citation>
    <scope>NUCLEOTIDE SEQUENCE [LARGE SCALE MRNA] (ISOFORM 2)</scope>
    <scope>VARIANT VAL-24</scope>
    <source>
        <tissue>Testis</tissue>
    </source>
</reference>
<reference key="7">
    <citation type="journal article" date="2016" name="Am. J. Hum. Genet.">
        <title>Isolated and syndromic retinal dystrophy caused by biallelic mutations in RCBTB1, a gene implicated in ubiquitination.</title>
        <authorList>
            <person name="Coppieters F."/>
            <person name="Ascari G."/>
            <person name="Dannhausen K."/>
            <person name="Nikopoulos K."/>
            <person name="Peelman F."/>
            <person name="Karlstetter M."/>
            <person name="Xu M."/>
            <person name="Brachet C."/>
            <person name="Meunier I."/>
            <person name="Tsilimbaris M.K."/>
            <person name="Tsika C."/>
            <person name="Blazaki S.V."/>
            <person name="Vergult S."/>
            <person name="Farinelli P."/>
            <person name="Van Laethem T."/>
            <person name="Bauwens M."/>
            <person name="De Bruyne M."/>
            <person name="Chen R."/>
            <person name="Langmann T."/>
            <person name="Sui R."/>
            <person name="Meire F."/>
            <person name="Rivolta C."/>
            <person name="Hamel C.P."/>
            <person name="Leroy B.P."/>
            <person name="De Baere E."/>
        </authorList>
    </citation>
    <scope>INVOLVEMENT IN RDEOA</scope>
    <scope>VARIANTS RDEOA MET-307; CYS-310; TYR-325; ARG-384; PHE-388 AND LEU-401</scope>
    <scope>TISSUE SPECIFICITY</scope>
</reference>
<organism>
    <name type="scientific">Homo sapiens</name>
    <name type="common">Human</name>
    <dbReference type="NCBI Taxonomy" id="9606"/>
    <lineage>
        <taxon>Eukaryota</taxon>
        <taxon>Metazoa</taxon>
        <taxon>Chordata</taxon>
        <taxon>Craniata</taxon>
        <taxon>Vertebrata</taxon>
        <taxon>Euteleostomi</taxon>
        <taxon>Mammalia</taxon>
        <taxon>Eutheria</taxon>
        <taxon>Euarchontoglires</taxon>
        <taxon>Primates</taxon>
        <taxon>Haplorrhini</taxon>
        <taxon>Catarrhini</taxon>
        <taxon>Hominidae</taxon>
        <taxon>Homo</taxon>
    </lineage>
</organism>
<dbReference type="EMBL" id="AF334406">
    <property type="protein sequence ID" value="AAK38372.1"/>
    <property type="molecule type" value="mRNA"/>
</dbReference>
<dbReference type="EMBL" id="AJ319660">
    <property type="protein sequence ID" value="CAC40027.1"/>
    <property type="molecule type" value="mRNA"/>
</dbReference>
<dbReference type="EMBL" id="AK096654">
    <property type="protein sequence ID" value="BAC04833.1"/>
    <property type="molecule type" value="mRNA"/>
</dbReference>
<dbReference type="EMBL" id="AL833821">
    <property type="protein sequence ID" value="CAD38683.1"/>
    <property type="molecule type" value="mRNA"/>
</dbReference>
<dbReference type="EMBL" id="AL139321">
    <property type="status" value="NOT_ANNOTATED_CDS"/>
    <property type="molecule type" value="Genomic_DNA"/>
</dbReference>
<dbReference type="EMBL" id="BC038104">
    <property type="protein sequence ID" value="AAH38104.1"/>
    <property type="molecule type" value="mRNA"/>
</dbReference>
<dbReference type="CCDS" id="CCDS9418.1">
    <molecule id="Q8NDN9-1"/>
</dbReference>
<dbReference type="RefSeq" id="NP_001339429.1">
    <molecule id="Q8NDN9-1"/>
    <property type="nucleotide sequence ID" value="NM_001352500.2"/>
</dbReference>
<dbReference type="RefSeq" id="NP_001339430.1">
    <molecule id="Q8NDN9-1"/>
    <property type="nucleotide sequence ID" value="NM_001352501.2"/>
</dbReference>
<dbReference type="RefSeq" id="NP_001339431.1">
    <molecule id="Q8NDN9-1"/>
    <property type="nucleotide sequence ID" value="NM_001352502.2"/>
</dbReference>
<dbReference type="RefSeq" id="NP_001339432.1">
    <molecule id="Q8NDN9-1"/>
    <property type="nucleotide sequence ID" value="NM_001352503.2"/>
</dbReference>
<dbReference type="RefSeq" id="NP_001339434.1">
    <molecule id="Q8NDN9-2"/>
    <property type="nucleotide sequence ID" value="NM_001352505.2"/>
</dbReference>
<dbReference type="RefSeq" id="NP_060661.3">
    <molecule id="Q8NDN9-1"/>
    <property type="nucleotide sequence ID" value="NM_018191.3"/>
</dbReference>
<dbReference type="RefSeq" id="XP_005266498.1">
    <property type="nucleotide sequence ID" value="XM_005266441.2"/>
</dbReference>
<dbReference type="RefSeq" id="XP_011533435.1">
    <property type="nucleotide sequence ID" value="XM_011535133.1"/>
</dbReference>
<dbReference type="RefSeq" id="XP_011533436.1">
    <molecule id="Q8NDN9-1"/>
    <property type="nucleotide sequence ID" value="XM_011535134.2"/>
</dbReference>
<dbReference type="SMR" id="Q8NDN9"/>
<dbReference type="BioGRID" id="120509">
    <property type="interactions" value="25"/>
</dbReference>
<dbReference type="FunCoup" id="Q8NDN9">
    <property type="interactions" value="715"/>
</dbReference>
<dbReference type="IntAct" id="Q8NDN9">
    <property type="interactions" value="24"/>
</dbReference>
<dbReference type="MINT" id="Q8NDN9"/>
<dbReference type="STRING" id="9606.ENSP00000367552"/>
<dbReference type="iPTMnet" id="Q8NDN9"/>
<dbReference type="PhosphoSitePlus" id="Q8NDN9"/>
<dbReference type="BioMuta" id="RCBTB1"/>
<dbReference type="DMDM" id="74751227"/>
<dbReference type="jPOST" id="Q8NDN9"/>
<dbReference type="MassIVE" id="Q8NDN9"/>
<dbReference type="PaxDb" id="9606-ENSP00000367552"/>
<dbReference type="PeptideAtlas" id="Q8NDN9"/>
<dbReference type="ProteomicsDB" id="73045">
    <molecule id="Q8NDN9-1"/>
</dbReference>
<dbReference type="ProteomicsDB" id="73046">
    <molecule id="Q8NDN9-2"/>
</dbReference>
<dbReference type="Pumba" id="Q8NDN9"/>
<dbReference type="Antibodypedia" id="23945">
    <property type="antibodies" value="232 antibodies from 30 providers"/>
</dbReference>
<dbReference type="DNASU" id="55213"/>
<dbReference type="Ensembl" id="ENST00000258646.3">
    <molecule id="Q8NDN9-1"/>
    <property type="protein sequence ID" value="ENSP00000258646.3"/>
    <property type="gene ID" value="ENSG00000136144.12"/>
</dbReference>
<dbReference type="Ensembl" id="ENST00000378302.7">
    <molecule id="Q8NDN9-1"/>
    <property type="protein sequence ID" value="ENSP00000367552.2"/>
    <property type="gene ID" value="ENSG00000136144.12"/>
</dbReference>
<dbReference type="GeneID" id="55213"/>
<dbReference type="KEGG" id="hsa:55213"/>
<dbReference type="MANE-Select" id="ENST00000378302.7">
    <property type="protein sequence ID" value="ENSP00000367552.2"/>
    <property type="RefSeq nucleotide sequence ID" value="NM_018191.4"/>
    <property type="RefSeq protein sequence ID" value="NP_060661.3"/>
</dbReference>
<dbReference type="UCSC" id="uc001vde.1">
    <molecule id="Q8NDN9-1"/>
    <property type="organism name" value="human"/>
</dbReference>
<dbReference type="AGR" id="HGNC:18243"/>
<dbReference type="CTD" id="55213"/>
<dbReference type="DisGeNET" id="55213"/>
<dbReference type="GeneCards" id="RCBTB1"/>
<dbReference type="HGNC" id="HGNC:18243">
    <property type="gene designation" value="RCBTB1"/>
</dbReference>
<dbReference type="HPA" id="ENSG00000136144">
    <property type="expression patterns" value="Low tissue specificity"/>
</dbReference>
<dbReference type="MalaCards" id="RCBTB1"/>
<dbReference type="MIM" id="607867">
    <property type="type" value="gene"/>
</dbReference>
<dbReference type="MIM" id="617175">
    <property type="type" value="phenotype"/>
</dbReference>
<dbReference type="neXtProt" id="NX_Q8NDN9"/>
<dbReference type="OpenTargets" id="ENSG00000136144"/>
<dbReference type="Orphanet" id="99002">
    <property type="disease" value="Reticular dystrophy of the retinal pigment epithelium"/>
</dbReference>
<dbReference type="PharmGKB" id="PA134955699"/>
<dbReference type="VEuPathDB" id="HostDB:ENSG00000136144"/>
<dbReference type="eggNOG" id="KOG1426">
    <property type="taxonomic scope" value="Eukaryota"/>
</dbReference>
<dbReference type="GeneTree" id="ENSGT00940000155814"/>
<dbReference type="HOGENOM" id="CLU_029788_1_0_1"/>
<dbReference type="InParanoid" id="Q8NDN9"/>
<dbReference type="OMA" id="FCIDGKY"/>
<dbReference type="OrthoDB" id="9472435at2759"/>
<dbReference type="PAN-GO" id="Q8NDN9">
    <property type="GO annotations" value="1 GO annotation based on evolutionary models"/>
</dbReference>
<dbReference type="PhylomeDB" id="Q8NDN9"/>
<dbReference type="TreeFam" id="TF329478"/>
<dbReference type="PathwayCommons" id="Q8NDN9"/>
<dbReference type="SignaLink" id="Q8NDN9"/>
<dbReference type="BioGRID-ORCS" id="55213">
    <property type="hits" value="9 hits in 1195 CRISPR screens"/>
</dbReference>
<dbReference type="ChiTaRS" id="RCBTB1">
    <property type="organism name" value="human"/>
</dbReference>
<dbReference type="GeneWiki" id="RCBTB1"/>
<dbReference type="GenomeRNAi" id="55213"/>
<dbReference type="Pharos" id="Q8NDN9">
    <property type="development level" value="Tbio"/>
</dbReference>
<dbReference type="PRO" id="PR:Q8NDN9"/>
<dbReference type="Proteomes" id="UP000005640">
    <property type="component" value="Chromosome 13"/>
</dbReference>
<dbReference type="RNAct" id="Q8NDN9">
    <property type="molecule type" value="protein"/>
</dbReference>
<dbReference type="Bgee" id="ENSG00000136144">
    <property type="expression patterns" value="Expressed in mucosa of paranasal sinus and 193 other cell types or tissues"/>
</dbReference>
<dbReference type="GO" id="GO:0005737">
    <property type="term" value="C:cytoplasm"/>
    <property type="evidence" value="ECO:0000314"/>
    <property type="project" value="LIFEdb"/>
</dbReference>
<dbReference type="GO" id="GO:0005634">
    <property type="term" value="C:nucleus"/>
    <property type="evidence" value="ECO:0007669"/>
    <property type="project" value="UniProtKB-SubCell"/>
</dbReference>
<dbReference type="GO" id="GO:0006325">
    <property type="term" value="P:chromatin organization"/>
    <property type="evidence" value="ECO:0007669"/>
    <property type="project" value="UniProtKB-KW"/>
</dbReference>
<dbReference type="CDD" id="cd18528">
    <property type="entry name" value="BACK_RCBTB1"/>
    <property type="match status" value="1"/>
</dbReference>
<dbReference type="CDD" id="cd18353">
    <property type="entry name" value="BTB_POZ_RCBTB1_CLLD7"/>
    <property type="match status" value="1"/>
</dbReference>
<dbReference type="FunFam" id="2.130.10.30:FF:000010">
    <property type="entry name" value="RCC1 and BTB domain-containing protein 1 isoform X2"/>
    <property type="match status" value="1"/>
</dbReference>
<dbReference type="FunFam" id="3.30.710.10:FF:000034">
    <property type="entry name" value="RCC1 and BTB domain-containing protein 1 isoform X2"/>
    <property type="match status" value="1"/>
</dbReference>
<dbReference type="Gene3D" id="3.30.710.10">
    <property type="entry name" value="Potassium Channel Kv1.1, Chain A"/>
    <property type="match status" value="1"/>
</dbReference>
<dbReference type="Gene3D" id="2.130.10.30">
    <property type="entry name" value="Regulator of chromosome condensation 1/beta-lactamase-inhibitor protein II"/>
    <property type="match status" value="1"/>
</dbReference>
<dbReference type="InterPro" id="IPR000210">
    <property type="entry name" value="BTB/POZ_dom"/>
</dbReference>
<dbReference type="InterPro" id="IPR047996">
    <property type="entry name" value="RCBTB1_BTB_POZ"/>
</dbReference>
<dbReference type="InterPro" id="IPR009091">
    <property type="entry name" value="RCC1/BLIP-II"/>
</dbReference>
<dbReference type="InterPro" id="IPR000408">
    <property type="entry name" value="Reg_chr_condens"/>
</dbReference>
<dbReference type="InterPro" id="IPR051625">
    <property type="entry name" value="Signaling_Regulatory_Domain"/>
</dbReference>
<dbReference type="InterPro" id="IPR011333">
    <property type="entry name" value="SKP1/BTB/POZ_sf"/>
</dbReference>
<dbReference type="PANTHER" id="PTHR22872">
    <property type="entry name" value="BTK-BINDING PROTEIN-RELATED"/>
    <property type="match status" value="1"/>
</dbReference>
<dbReference type="PANTHER" id="PTHR22872:SF4">
    <property type="entry name" value="RCC1 AND BTB DOMAIN-CONTAINING PROTEIN 1 ISOFORM X1"/>
    <property type="match status" value="1"/>
</dbReference>
<dbReference type="Pfam" id="PF00651">
    <property type="entry name" value="BTB"/>
    <property type="match status" value="1"/>
</dbReference>
<dbReference type="Pfam" id="PF25390">
    <property type="entry name" value="WD40_RLD"/>
    <property type="match status" value="1"/>
</dbReference>
<dbReference type="PRINTS" id="PR00633">
    <property type="entry name" value="RCCNDNSATION"/>
</dbReference>
<dbReference type="SMART" id="SM00225">
    <property type="entry name" value="BTB"/>
    <property type="match status" value="1"/>
</dbReference>
<dbReference type="SUPFAM" id="SSF54695">
    <property type="entry name" value="POZ domain"/>
    <property type="match status" value="1"/>
</dbReference>
<dbReference type="SUPFAM" id="SSF50985">
    <property type="entry name" value="RCC1/BLIP-II"/>
    <property type="match status" value="1"/>
</dbReference>
<dbReference type="PROSITE" id="PS50097">
    <property type="entry name" value="BTB"/>
    <property type="match status" value="1"/>
</dbReference>
<dbReference type="PROSITE" id="PS00626">
    <property type="entry name" value="RCC1_2"/>
    <property type="match status" value="1"/>
</dbReference>
<dbReference type="PROSITE" id="PS50012">
    <property type="entry name" value="RCC1_3"/>
    <property type="match status" value="5"/>
</dbReference>
<gene>
    <name type="primary">RCBTB1</name>
    <name type="synonym">CLLD7</name>
    <name type="synonym">E4.5</name>
</gene>
<accession>Q8NDN9</accession>
<accession>Q8IY29</accession>
<accession>Q969U9</accession>
<keyword id="KW-0025">Alternative splicing</keyword>
<keyword id="KW-0131">Cell cycle</keyword>
<keyword id="KW-0156">Chromatin regulator</keyword>
<keyword id="KW-0225">Disease variant</keyword>
<keyword id="KW-0539">Nucleus</keyword>
<keyword id="KW-1267">Proteomics identification</keyword>
<keyword id="KW-1185">Reference proteome</keyword>
<keyword id="KW-0677">Repeat</keyword>
<keyword id="KW-0804">Transcription</keyword>
<keyword id="KW-0805">Transcription regulation</keyword>
<comment type="function">
    <text evidence="2">May be involved in cell cycle regulation by chromatin remodeling.</text>
</comment>
<comment type="interaction">
    <interactant intactId="EBI-2811558">
        <id>Q8NDN9</id>
    </interactant>
    <interactant intactId="EBI-2838246">
        <id>Q6AI12</id>
        <label>ANKRD40</label>
    </interactant>
    <organismsDiffer>false</organismsDiffer>
    <experiments>2</experiments>
</comment>
<comment type="interaction">
    <interactant intactId="EBI-25880533">
        <id>Q8NDN9-2</id>
    </interactant>
    <interactant intactId="EBI-21251460">
        <id>O60260-5</id>
        <label>PRKN</label>
    </interactant>
    <organismsDiffer>false</organismsDiffer>
    <experiments>3</experiments>
</comment>
<comment type="subcellular location">
    <subcellularLocation>
        <location evidence="8">Nucleus</location>
    </subcellularLocation>
</comment>
<comment type="alternative products">
    <event type="alternative splicing"/>
    <isoform>
        <id>Q8NDN9-1</id>
        <name>1</name>
        <sequence type="displayed"/>
    </isoform>
    <isoform>
        <id>Q8NDN9-2</id>
        <name>2</name>
        <sequence type="described" ref="VSP_040263 VSP_040264"/>
    </isoform>
</comment>
<comment type="tissue specificity">
    <text evidence="2 6">Ubiquitously expressed (PubMed:11306461, PubMed:27486781). In the retina, present in the nerve fiber layer and to a lesser extent in the inner and outer plexiform layers (at protein level) (PubMed:27486781).</text>
</comment>
<comment type="disease" evidence="6">
    <disease id="DI-04885">
        <name>Retinal dystrophy with or without extraocular anomalies</name>
        <acronym>RDEOA</acronym>
        <description>An autosomal recessive disease characterized by progressive retinal dystrophy, chorioretinal macular atrophy, reduced cone and rod responses on ERG, and decrease visual acuity. Extraocular anomalies are variably present in some patients and include pulmonary fibrosis, sensorineural hearing loss, and endocrine features such as goiter and primary ovarian insufficiency.</description>
        <dbReference type="MIM" id="617175"/>
    </disease>
    <text>The disease is caused by variants affecting the gene represented in this entry.</text>
</comment>
<protein>
    <recommendedName>
        <fullName>RCC1 and BTB domain-containing protein 1</fullName>
    </recommendedName>
    <alternativeName>
        <fullName>Chronic lymphocytic leukemia deletion region gene 7 protein</fullName>
        <shortName>CLL deletion region gene 7 protein</shortName>
    </alternativeName>
    <alternativeName>
        <fullName>Regulator of chromosome condensation and BTB domain-containing protein 1</fullName>
    </alternativeName>
</protein>
<feature type="chain" id="PRO_0000206642" description="RCC1 and BTB domain-containing protein 1">
    <location>
        <begin position="1"/>
        <end position="531"/>
    </location>
</feature>
<feature type="repeat" description="RCC1 1">
    <location>
        <begin position="40"/>
        <end position="91"/>
    </location>
</feature>
<feature type="repeat" description="RCC1 2">
    <location>
        <begin position="93"/>
        <end position="145"/>
    </location>
</feature>
<feature type="repeat" description="RCC1 3">
    <location>
        <begin position="147"/>
        <end position="198"/>
    </location>
</feature>
<feature type="repeat" description="RCC1 4">
    <location>
        <begin position="199"/>
        <end position="250"/>
    </location>
</feature>
<feature type="repeat" description="RCC1 5">
    <location>
        <begin position="252"/>
        <end position="302"/>
    </location>
</feature>
<feature type="repeat" description="RCC1 6">
    <location>
        <begin position="304"/>
        <end position="356"/>
    </location>
</feature>
<feature type="domain" description="BTB 1" evidence="1">
    <location>
        <begin position="370"/>
        <end position="437"/>
    </location>
</feature>
<feature type="domain" description="BTB 2" evidence="1">
    <location>
        <begin position="470"/>
        <end position="499"/>
    </location>
</feature>
<feature type="splice variant" id="VSP_040263" description="In isoform 2." evidence="7">
    <original>EHEDFLT</original>
    <variation>VSIVIGK</variation>
    <location>
        <begin position="349"/>
        <end position="355"/>
    </location>
</feature>
<feature type="splice variant" id="VSP_040264" description="In isoform 2." evidence="7">
    <location>
        <begin position="356"/>
        <end position="531"/>
    </location>
</feature>
<feature type="sequence variant" id="VAR_024757" description="In dbSNP:rs4942848." evidence="2 3 4 5">
    <original>A</original>
    <variation>V</variation>
    <location>
        <position position="24"/>
    </location>
</feature>
<feature type="sequence variant" id="VAR_077962" description="In RDEOA; dbSNP:rs368217569." evidence="6">
    <original>V</original>
    <variation>M</variation>
    <location>
        <position position="307"/>
    </location>
</feature>
<feature type="sequence variant" id="VAR_077963" description="In RDEOA; dbSNP:rs772592456." evidence="6">
    <original>W</original>
    <variation>C</variation>
    <location>
        <position position="310"/>
    </location>
</feature>
<feature type="sequence variant" id="VAR_077964" description="In RDEOA; dbSNP:rs200826424." evidence="6">
    <original>H</original>
    <variation>Y</variation>
    <location>
        <position position="325"/>
    </location>
</feature>
<feature type="sequence variant" id="VAR_077965" description="In RDEOA; uncertain significance; dbSNP:rs143970072." evidence="6">
    <original>H</original>
    <variation>R</variation>
    <location>
        <position position="384"/>
    </location>
</feature>
<feature type="sequence variant" id="VAR_077966" description="In RDEOA; dbSNP:rs879255547." evidence="6">
    <original>L</original>
    <variation>F</variation>
    <location>
        <position position="388"/>
    </location>
</feature>
<feature type="sequence variant" id="VAR_077967" description="In RDEOA; uncertain significance; dbSNP:rs556664001." evidence="6">
    <original>S</original>
    <variation>L</variation>
    <location>
        <position position="401"/>
    </location>
</feature>
<feature type="sequence variant" id="VAR_024830" evidence="2">
    <original>T</original>
    <variation>I</variation>
    <location>
        <position position="500"/>
    </location>
</feature>
<feature type="sequence conflict" description="In Ref. 6; AAH38104." evidence="8" ref="6">
    <original>P</original>
    <variation>T</variation>
    <location>
        <position position="118"/>
    </location>
</feature>
<name>RCBT1_HUMAN</name>
<proteinExistence type="evidence at protein level"/>
<sequence>MVDVGKWPIFTLLSPQEIASIRKACVFGTSASEALYVTDNDEVFVFGLNYSNCLGTGDNQSTLVPKKLEGLCGKKIKSLSYGSGPHVLLSTEDGVVYAWGHNGYSQLGNGTTNQGIAPVQVCTNLLIKQVVEVACGSHHSMALAADGEVFAWGYNNCGQVGSGSTANQPTPRKVTNCLHIKRVVGIACGQTSSMAVLDNGEVYGWGYNGNGQLGLGNNGNQLTPVRVAALHSVCVNQIVCGYAHTLALTDEGLLYAWGANTYGQLGTGNKNNLLSPAHIMVEKERVVEIAACHSAHTSAAKTQGGHVYMWGQCRGQSVILPHLTHFSCTDDVFACFATPAVSWRLLSVEHEDFLTVAESLKKEFDSPETADLKFRIDGKYIHVHKAVLKIRCEHFRSMFQSYWNEDMKEVIEIDQFSYPVYRAFLQYLYTDTVDLPPEDAIGLLDLATSYCENRLKKLCQHIIKRGITVENAFSLFSAAVRYDAEDLEEFCFKFCINHLTEVTQTAAFWQMDGPLLKEFIAKASKCGAFKN</sequence>